<organism>
    <name type="scientific">Phaseolus vulgaris</name>
    <name type="common">Kidney bean</name>
    <name type="synonym">French bean</name>
    <dbReference type="NCBI Taxonomy" id="3885"/>
    <lineage>
        <taxon>Eukaryota</taxon>
        <taxon>Viridiplantae</taxon>
        <taxon>Streptophyta</taxon>
        <taxon>Embryophyta</taxon>
        <taxon>Tracheophyta</taxon>
        <taxon>Spermatophyta</taxon>
        <taxon>Magnoliopsida</taxon>
        <taxon>eudicotyledons</taxon>
        <taxon>Gunneridae</taxon>
        <taxon>Pentapetalae</taxon>
        <taxon>rosids</taxon>
        <taxon>fabids</taxon>
        <taxon>Fabales</taxon>
        <taxon>Fabaceae</taxon>
        <taxon>Papilionoideae</taxon>
        <taxon>50 kb inversion clade</taxon>
        <taxon>NPAAA clade</taxon>
        <taxon>indigoferoid/millettioid clade</taxon>
        <taxon>Phaseoleae</taxon>
        <taxon>Phaseolus</taxon>
    </lineage>
</organism>
<protein>
    <recommendedName>
        <fullName>Ferritin, chloroplastic</fullName>
        <ecNumber>1.16.3.1</ecNumber>
    </recommendedName>
</protein>
<keyword id="KW-0150">Chloroplast</keyword>
<keyword id="KW-0408">Iron</keyword>
<keyword id="KW-0409">Iron storage</keyword>
<keyword id="KW-0479">Metal-binding</keyword>
<keyword id="KW-0560">Oxidoreductase</keyword>
<keyword id="KW-0934">Plastid</keyword>
<keyword id="KW-0809">Transit peptide</keyword>
<proteinExistence type="evidence at transcript level"/>
<feature type="transit peptide" description="Chloroplast">
    <location>
        <begin position="1"/>
        <end position="48"/>
    </location>
</feature>
<feature type="chain" id="PRO_0000008863" description="Ferritin, chloroplastic">
    <location>
        <begin position="49"/>
        <end position="254"/>
    </location>
</feature>
<feature type="domain" description="Ferritin-like diiron" evidence="2">
    <location>
        <begin position="82"/>
        <end position="235"/>
    </location>
</feature>
<feature type="region of interest" description="Extension peptide (EP)">
    <location>
        <begin position="49"/>
        <end position="81"/>
    </location>
</feature>
<feature type="binding site" evidence="2">
    <location>
        <position position="99"/>
    </location>
    <ligand>
        <name>Fe cation</name>
        <dbReference type="ChEBI" id="CHEBI:24875"/>
        <label>1</label>
    </ligand>
</feature>
<feature type="binding site" evidence="2">
    <location>
        <position position="134"/>
    </location>
    <ligand>
        <name>Fe cation</name>
        <dbReference type="ChEBI" id="CHEBI:24875"/>
        <label>1</label>
    </ligand>
</feature>
<feature type="binding site" evidence="2">
    <location>
        <position position="134"/>
    </location>
    <ligand>
        <name>Fe cation</name>
        <dbReference type="ChEBI" id="CHEBI:24875"/>
        <label>2</label>
    </ligand>
</feature>
<feature type="binding site" evidence="2">
    <location>
        <position position="137"/>
    </location>
    <ligand>
        <name>Fe cation</name>
        <dbReference type="ChEBI" id="CHEBI:24875"/>
        <label>1</label>
    </ligand>
</feature>
<feature type="binding site" evidence="2">
    <location>
        <position position="183"/>
    </location>
    <ligand>
        <name>Fe cation</name>
        <dbReference type="ChEBI" id="CHEBI:24875"/>
        <label>2</label>
    </ligand>
</feature>
<feature type="binding site" evidence="2">
    <location>
        <position position="217"/>
    </location>
    <ligand>
        <name>Fe cation</name>
        <dbReference type="ChEBI" id="CHEBI:24875"/>
        <label>2</label>
    </ligand>
</feature>
<dbReference type="EC" id="1.16.3.1"/>
<dbReference type="EMBL" id="X58274">
    <property type="protein sequence ID" value="CAA41213.1"/>
    <property type="status" value="ALT_SEQ"/>
    <property type="molecule type" value="mRNA"/>
</dbReference>
<dbReference type="PIR" id="S17426">
    <property type="entry name" value="FRFBH"/>
</dbReference>
<dbReference type="RefSeq" id="XP_007140214.1">
    <property type="nucleotide sequence ID" value="XM_007140152.1"/>
</dbReference>
<dbReference type="SMR" id="P25699"/>
<dbReference type="ProMEX" id="P25699"/>
<dbReference type="EnsemblPlants" id="ESW12208">
    <property type="protein sequence ID" value="ESW12208"/>
    <property type="gene ID" value="PHAVU_008G093700g"/>
</dbReference>
<dbReference type="Gramene" id="ESW12208">
    <property type="protein sequence ID" value="ESW12208"/>
    <property type="gene ID" value="PHAVU_008G093700g"/>
</dbReference>
<dbReference type="eggNOG" id="KOG2332">
    <property type="taxonomic scope" value="Eukaryota"/>
</dbReference>
<dbReference type="OMA" id="REHACKF"/>
<dbReference type="OrthoDB" id="186462at2759"/>
<dbReference type="GO" id="GO:0009507">
    <property type="term" value="C:chloroplast"/>
    <property type="evidence" value="ECO:0007669"/>
    <property type="project" value="UniProtKB-SubCell"/>
</dbReference>
<dbReference type="GO" id="GO:0008199">
    <property type="term" value="F:ferric iron binding"/>
    <property type="evidence" value="ECO:0007669"/>
    <property type="project" value="InterPro"/>
</dbReference>
<dbReference type="GO" id="GO:0008198">
    <property type="term" value="F:ferrous iron binding"/>
    <property type="evidence" value="ECO:0007669"/>
    <property type="project" value="TreeGrafter"/>
</dbReference>
<dbReference type="GO" id="GO:0004322">
    <property type="term" value="F:ferroxidase activity"/>
    <property type="evidence" value="ECO:0007669"/>
    <property type="project" value="UniProtKB-EC"/>
</dbReference>
<dbReference type="GO" id="GO:0006879">
    <property type="term" value="P:intracellular iron ion homeostasis"/>
    <property type="evidence" value="ECO:0007669"/>
    <property type="project" value="UniProtKB-KW"/>
</dbReference>
<dbReference type="GO" id="GO:0006826">
    <property type="term" value="P:iron ion transport"/>
    <property type="evidence" value="ECO:0007669"/>
    <property type="project" value="InterPro"/>
</dbReference>
<dbReference type="CDD" id="cd01056">
    <property type="entry name" value="Euk_Ferritin"/>
    <property type="match status" value="1"/>
</dbReference>
<dbReference type="FunFam" id="1.20.1260.10:FF:000006">
    <property type="entry name" value="Ferritin"/>
    <property type="match status" value="1"/>
</dbReference>
<dbReference type="Gene3D" id="1.20.1260.10">
    <property type="match status" value="1"/>
</dbReference>
<dbReference type="InterPro" id="IPR001519">
    <property type="entry name" value="Ferritin"/>
</dbReference>
<dbReference type="InterPro" id="IPR012347">
    <property type="entry name" value="Ferritin-like"/>
</dbReference>
<dbReference type="InterPro" id="IPR009040">
    <property type="entry name" value="Ferritin-like_diiron"/>
</dbReference>
<dbReference type="InterPro" id="IPR009078">
    <property type="entry name" value="Ferritin-like_SF"/>
</dbReference>
<dbReference type="InterPro" id="IPR014034">
    <property type="entry name" value="Ferritin_CS"/>
</dbReference>
<dbReference type="InterPro" id="IPR008331">
    <property type="entry name" value="Ferritin_DPS_dom"/>
</dbReference>
<dbReference type="PANTHER" id="PTHR11431">
    <property type="entry name" value="FERRITIN"/>
    <property type="match status" value="1"/>
</dbReference>
<dbReference type="PANTHER" id="PTHR11431:SF90">
    <property type="entry name" value="FERRITIN-1, CHLOROPLASTIC"/>
    <property type="match status" value="1"/>
</dbReference>
<dbReference type="Pfam" id="PF00210">
    <property type="entry name" value="Ferritin"/>
    <property type="match status" value="1"/>
</dbReference>
<dbReference type="SUPFAM" id="SSF47240">
    <property type="entry name" value="Ferritin-like"/>
    <property type="match status" value="1"/>
</dbReference>
<dbReference type="PROSITE" id="PS00540">
    <property type="entry name" value="FERRITIN_1"/>
    <property type="match status" value="1"/>
</dbReference>
<dbReference type="PROSITE" id="PS00204">
    <property type="entry name" value="FERRITIN_2"/>
    <property type="match status" value="1"/>
</dbReference>
<dbReference type="PROSITE" id="PS50905">
    <property type="entry name" value="FERRITIN_LIKE"/>
    <property type="match status" value="1"/>
</dbReference>
<accession>P25699</accession>
<evidence type="ECO:0000250" key="1"/>
<evidence type="ECO:0000255" key="2">
    <source>
        <dbReference type="PROSITE-ProRule" id="PRU00085"/>
    </source>
</evidence>
<evidence type="ECO:0000305" key="3"/>
<reference key="1">
    <citation type="journal article" date="1991" name="Plant Mol. Biol.">
        <title>The structure of a Phaseolus vulgaris cDNA encoding the iron storage protein ferritin.</title>
        <authorList>
            <person name="Spence M.J."/>
            <person name="Henzl M.T."/>
            <person name="Lammers P.J."/>
        </authorList>
    </citation>
    <scope>NUCLEOTIDE SEQUENCE [MRNA]</scope>
    <source>
        <strain>cv. Tendergreen</strain>
        <tissue>Seed</tissue>
    </source>
</reference>
<gene>
    <name type="primary">PFE</name>
</gene>
<comment type="function">
    <text evidence="1">Stores iron in a soluble, non-toxic, readily available form. Important for iron homeostasis. Has ferroxidase activity. Iron is taken up in the ferrous form and deposited as ferric hydroxides after oxidation (By similarity).</text>
</comment>
<comment type="catalytic activity">
    <reaction>
        <text>4 Fe(2+) + O2 + 4 H(+) = 4 Fe(3+) + 2 H2O</text>
        <dbReference type="Rhea" id="RHEA:11148"/>
        <dbReference type="ChEBI" id="CHEBI:15377"/>
        <dbReference type="ChEBI" id="CHEBI:15378"/>
        <dbReference type="ChEBI" id="CHEBI:15379"/>
        <dbReference type="ChEBI" id="CHEBI:29033"/>
        <dbReference type="ChEBI" id="CHEBI:29034"/>
        <dbReference type="EC" id="1.16.3.1"/>
    </reaction>
</comment>
<comment type="subunit">
    <text evidence="1">Oligomer of 24 subunits. There are two types of subunits: L (light) chain and H (heavy) chain. The major chain can be light or heavy, depending on the species and tissue type. The functional molecule forms a roughly spherical shell with a diameter of 12 nm and contains a central cavity into which the insoluble mineral iron core is deposited (By similarity).</text>
</comment>
<comment type="subcellular location">
    <subcellularLocation>
        <location>Plastid</location>
        <location>Chloroplast</location>
    </subcellularLocation>
    <subcellularLocation>
        <location>Plastid</location>
    </subcellularLocation>
</comment>
<comment type="similarity">
    <text evidence="3">Belongs to the ferritin family.</text>
</comment>
<name>FRI_PHAVU</name>
<sequence>MALAPSKVSPFSGFSLSDGVGAVRNPTCSVSLSFLNKKVGSRNLGVSASTVPLTGVIFEPFEEVKKEELAVPTAGQVSLARQYYADECESAINEQINVEYNASYVYHSLFAYFDRDNVALKGFARFFKESSEEEREHAEKLMKYQNTRGGRVVLHPIKNVPSEFEHVEKGDALYAMELALSLEKLVNEKLRSVHSVADRNKDPQLADFIESEFLSEQVEAIKKISEYVAQLRMVGKGHGVWHFDQSLLHDGHAA</sequence>